<gene>
    <name evidence="1" type="primary">cshA</name>
    <name type="synonym">ydbR</name>
    <name type="ordered locus">BSU04580</name>
</gene>
<proteinExistence type="evidence at protein level"/>
<sequence length="494" mass="55330">MTITFQDFNLSSDLMKAINRMGFEEATPIQAQTIPLGLSNKDVIGQAQTGTGKTAAFGIPLVEKINPESPNIQAIVIAPTRELAIQVSEELYKIGQDKRAKVLPIYGGQDIGRQIRALKKNPNIIVGTPGRLLDHINRRTIRLNNVNTVVMDEADEMLNMGFIDDIESILSNVPSEHQTLLFSATMPAPIKRIAERFMTEPEHVKVKAKEMTVSNIQQFYLEVQERKKFDTLTRLLDIQSPELAIVFGRTKRRVDELAEALNLRGYAAEGIHGDLTQAKRMVALRKFKEGAIEVLVATDVAARGLDISGVTHVYNFDVPQDPESYVHRIGRTGRAGKTGMAMTFITPREKSMLRAIEQTTKRKMDRMKEPTLDEALEGQQQVTVERLRTTISENNLNFYMTAAAELLEDHDAVTVVAAAIKMATKEPDDTPVRLTDEAPMVSKRYKNQRSSKRRDGQGGGYRGGKGKSNNRSSYDKKRSNDRRSSGDRRQKKSY</sequence>
<reference key="1">
    <citation type="submission" date="1997-03" db="EMBL/GenBank/DDBJ databases">
        <title>A 148 kbp sequence of the region between 35 and 47 degree of the Bacillus subtilis genome.</title>
        <authorList>
            <person name="Kasahara Y."/>
            <person name="Nakai S."/>
            <person name="Lee S."/>
            <person name="Sadaie Y."/>
            <person name="Ogasawara N."/>
        </authorList>
    </citation>
    <scope>NUCLEOTIDE SEQUENCE [GENOMIC DNA]</scope>
    <source>
        <strain>168</strain>
    </source>
</reference>
<reference key="2">
    <citation type="journal article" date="1997" name="Nature">
        <title>The complete genome sequence of the Gram-positive bacterium Bacillus subtilis.</title>
        <authorList>
            <person name="Kunst F."/>
            <person name="Ogasawara N."/>
            <person name="Moszer I."/>
            <person name="Albertini A.M."/>
            <person name="Alloni G."/>
            <person name="Azevedo V."/>
            <person name="Bertero M.G."/>
            <person name="Bessieres P."/>
            <person name="Bolotin A."/>
            <person name="Borchert S."/>
            <person name="Borriss R."/>
            <person name="Boursier L."/>
            <person name="Brans A."/>
            <person name="Braun M."/>
            <person name="Brignell S.C."/>
            <person name="Bron S."/>
            <person name="Brouillet S."/>
            <person name="Bruschi C.V."/>
            <person name="Caldwell B."/>
            <person name="Capuano V."/>
            <person name="Carter N.M."/>
            <person name="Choi S.-K."/>
            <person name="Codani J.-J."/>
            <person name="Connerton I.F."/>
            <person name="Cummings N.J."/>
            <person name="Daniel R.A."/>
            <person name="Denizot F."/>
            <person name="Devine K.M."/>
            <person name="Duesterhoeft A."/>
            <person name="Ehrlich S.D."/>
            <person name="Emmerson P.T."/>
            <person name="Entian K.-D."/>
            <person name="Errington J."/>
            <person name="Fabret C."/>
            <person name="Ferrari E."/>
            <person name="Foulger D."/>
            <person name="Fritz C."/>
            <person name="Fujita M."/>
            <person name="Fujita Y."/>
            <person name="Fuma S."/>
            <person name="Galizzi A."/>
            <person name="Galleron N."/>
            <person name="Ghim S.-Y."/>
            <person name="Glaser P."/>
            <person name="Goffeau A."/>
            <person name="Golightly E.J."/>
            <person name="Grandi G."/>
            <person name="Guiseppi G."/>
            <person name="Guy B.J."/>
            <person name="Haga K."/>
            <person name="Haiech J."/>
            <person name="Harwood C.R."/>
            <person name="Henaut A."/>
            <person name="Hilbert H."/>
            <person name="Holsappel S."/>
            <person name="Hosono S."/>
            <person name="Hullo M.-F."/>
            <person name="Itaya M."/>
            <person name="Jones L.-M."/>
            <person name="Joris B."/>
            <person name="Karamata D."/>
            <person name="Kasahara Y."/>
            <person name="Klaerr-Blanchard M."/>
            <person name="Klein C."/>
            <person name="Kobayashi Y."/>
            <person name="Koetter P."/>
            <person name="Koningstein G."/>
            <person name="Krogh S."/>
            <person name="Kumano M."/>
            <person name="Kurita K."/>
            <person name="Lapidus A."/>
            <person name="Lardinois S."/>
            <person name="Lauber J."/>
            <person name="Lazarevic V."/>
            <person name="Lee S.-M."/>
            <person name="Levine A."/>
            <person name="Liu H."/>
            <person name="Masuda S."/>
            <person name="Mauel C."/>
            <person name="Medigue C."/>
            <person name="Medina N."/>
            <person name="Mellado R.P."/>
            <person name="Mizuno M."/>
            <person name="Moestl D."/>
            <person name="Nakai S."/>
            <person name="Noback M."/>
            <person name="Noone D."/>
            <person name="O'Reilly M."/>
            <person name="Ogawa K."/>
            <person name="Ogiwara A."/>
            <person name="Oudega B."/>
            <person name="Park S.-H."/>
            <person name="Parro V."/>
            <person name="Pohl T.M."/>
            <person name="Portetelle D."/>
            <person name="Porwollik S."/>
            <person name="Prescott A.M."/>
            <person name="Presecan E."/>
            <person name="Pujic P."/>
            <person name="Purnelle B."/>
            <person name="Rapoport G."/>
            <person name="Rey M."/>
            <person name="Reynolds S."/>
            <person name="Rieger M."/>
            <person name="Rivolta C."/>
            <person name="Rocha E."/>
            <person name="Roche B."/>
            <person name="Rose M."/>
            <person name="Sadaie Y."/>
            <person name="Sato T."/>
            <person name="Scanlan E."/>
            <person name="Schleich S."/>
            <person name="Schroeter R."/>
            <person name="Scoffone F."/>
            <person name="Sekiguchi J."/>
            <person name="Sekowska A."/>
            <person name="Seror S.J."/>
            <person name="Serror P."/>
            <person name="Shin B.-S."/>
            <person name="Soldo B."/>
            <person name="Sorokin A."/>
            <person name="Tacconi E."/>
            <person name="Takagi T."/>
            <person name="Takahashi H."/>
            <person name="Takemaru K."/>
            <person name="Takeuchi M."/>
            <person name="Tamakoshi A."/>
            <person name="Tanaka T."/>
            <person name="Terpstra P."/>
            <person name="Tognoni A."/>
            <person name="Tosato V."/>
            <person name="Uchiyama S."/>
            <person name="Vandenbol M."/>
            <person name="Vannier F."/>
            <person name="Vassarotti A."/>
            <person name="Viari A."/>
            <person name="Wambutt R."/>
            <person name="Wedler E."/>
            <person name="Wedler H."/>
            <person name="Weitzenegger T."/>
            <person name="Winters P."/>
            <person name="Wipat A."/>
            <person name="Yamamoto H."/>
            <person name="Yamane K."/>
            <person name="Yasumoto K."/>
            <person name="Yata K."/>
            <person name="Yoshida K."/>
            <person name="Yoshikawa H.-F."/>
            <person name="Zumstein E."/>
            <person name="Yoshikawa H."/>
            <person name="Danchin A."/>
        </authorList>
    </citation>
    <scope>NUCLEOTIDE SEQUENCE [LARGE SCALE GENOMIC DNA]</scope>
    <source>
        <strain>168</strain>
    </source>
</reference>
<reference key="3">
    <citation type="journal article" date="2002" name="J. Bacteriol.">
        <title>Genomewide transcriptional analysis of the cold shock response in Bacillus subtilis.</title>
        <authorList>
            <person name="Beckering C.L."/>
            <person name="Steil L."/>
            <person name="Weber M.H.W."/>
            <person name="Voelker U."/>
            <person name="Marahiel M.A."/>
        </authorList>
    </citation>
    <scope>INDUCTION BY COLD SHOCK</scope>
    <source>
        <strain>168 / JH642</strain>
    </source>
</reference>
<reference key="4">
    <citation type="journal article" date="2006" name="Biosci. Biotechnol. Biochem.">
        <title>Bacillus subtilis DEAD protein YdbR possesses ATPase, RNA binding, and RNA unwinding activities.</title>
        <authorList>
            <person name="Ando Y."/>
            <person name="Nakamura K."/>
        </authorList>
    </citation>
    <scope>FUNCTION AS AN ATPASE</scope>
    <scope>FUNCTION AS AN RNA HELICASE</scope>
    <scope>COFACTOR</scope>
    <scope>ACTIVITY REGULATION</scope>
    <scope>SUBCELLULAR LOCATION</scope>
    <scope>DISRUPTION PHENOTYPE</scope>
    <scope>RNA-BINDING</scope>
    <source>
        <strain>168</strain>
    </source>
</reference>
<reference key="5">
    <citation type="journal article" date="2006" name="J. Bacteriol.">
        <title>Cold-induced putative DEAD box RNA helicases CshA and CshB are essential for cold adaptation and interact with cold shock protein B in Bacillus subtilis.</title>
        <authorList>
            <person name="Hunger K."/>
            <person name="Beckering C.L."/>
            <person name="Wiegeshoff F."/>
            <person name="Graumann P.L."/>
            <person name="Marahiel M.A."/>
        </authorList>
    </citation>
    <scope>FUNCTION</scope>
    <scope>SUBCELLULAR LOCATION</scope>
    <scope>INDUCTION</scope>
    <scope>DISRUPTION PHENOTYPE</scope>
    <source>
        <strain>168 / JH642</strain>
    </source>
</reference>
<reference key="6">
    <citation type="journal article" date="2010" name="Mol. Microbiol.">
        <title>The RNA degradosome in Bacillus subtilis: identification of CshA as the major RNA helicase in the multiprotein complex.</title>
        <authorList>
            <person name="Lehnik-Habrink M."/>
            <person name="Pfortner H."/>
            <person name="Rempeters L."/>
            <person name="Pietack N."/>
            <person name="Herzberg C."/>
            <person name="Stulke J."/>
        </authorList>
    </citation>
    <scope>SUBUNIT</scope>
    <scope>SUBCELLULAR LOCATION</scope>
    <scope>INDUCTION</scope>
    <scope>DOMAIN</scope>
    <source>
        <strain>168</strain>
    </source>
</reference>
<reference key="7">
    <citation type="journal article" date="2011" name="J. Bacteriol.">
        <title>RNase Y in Bacillus subtilis: a natively disordered protein that is the functional equivalent of RNase E from Escherichia coli.</title>
        <authorList>
            <person name="Lehnik-Habrink M."/>
            <person name="Newman J."/>
            <person name="Rothe F.M."/>
            <person name="Solovyova A.S."/>
            <person name="Rodrigues C."/>
            <person name="Herzberg C."/>
            <person name="Commichau F.M."/>
            <person name="Lewis R.J."/>
            <person name="Stulke J."/>
        </authorList>
    </citation>
    <scope>INTERACTION WITH RNY</scope>
    <scope>SUBUNIT</scope>
    <source>
        <strain>168</strain>
    </source>
</reference>
<reference key="8">
    <citation type="journal article" date="2011" name="J. Bacteriol.">
        <title>Characterization of components of the Staphylococcus aureus mRNA degradosome holoenzyme-like complex.</title>
        <authorList>
            <person name="Roux C.M."/>
            <person name="DeMuth J.P."/>
            <person name="Dunman P.M."/>
        </authorList>
    </citation>
    <scope>INTERACTION WITH RNPA</scope>
    <scope>SUBUNIT</scope>
</reference>
<reference key="9">
    <citation type="journal article" date="2011" name="Proteomics">
        <title>The dynamic protein partnership of RNA polymerase in Bacillus subtilis.</title>
        <authorList>
            <person name="Delumeau O."/>
            <person name="Lecointe F."/>
            <person name="Muntel J."/>
            <person name="Guillot A."/>
            <person name="Guedon E."/>
            <person name="Monnet V."/>
            <person name="Hecker M."/>
            <person name="Becher D."/>
            <person name="Polard P."/>
            <person name="Noirot P."/>
        </authorList>
    </citation>
    <scope>SUBUNIT</scope>
    <source>
        <strain>168</strain>
    </source>
</reference>
<reference key="10">
    <citation type="journal article" date="2013" name="J. Bacteriol.">
        <title>DEAD-box RNA helicases in Bacillus subtilis have multiple functions and act independently from each other.</title>
        <authorList>
            <person name="Lehnik-Habrink M."/>
            <person name="Rempeters L."/>
            <person name="Kovacs A.T."/>
            <person name="Wrede C."/>
            <person name="Baierlein C."/>
            <person name="Krebber H."/>
            <person name="Kuipers O.P."/>
            <person name="Stulke J."/>
        </authorList>
    </citation>
    <scope>FUNCTION</scope>
    <scope>INTERACTION WITH RPLA AND RPLC</scope>
    <scope>SUBUNIT</scope>
    <scope>INDUCTION</scope>
    <scope>DISRUPTION PHENOTYPE</scope>
    <source>
        <strain>168</strain>
    </source>
</reference>
<reference key="11">
    <citation type="journal article" date="2022" name="Mol. Microbiol.">
        <title>Multiple mechanisms for overcoming lethal over-initiation of DNA replication.</title>
        <authorList>
            <person name="Anderson M.E."/>
            <person name="Smith J.L."/>
            <person name="Grossman A.D."/>
        </authorList>
    </citation>
    <scope>DISRUPTION PHENOTYPE</scope>
    <source>
        <strain>168 / JH642</strain>
    </source>
</reference>
<dbReference type="EC" id="3.6.4.13" evidence="1"/>
<dbReference type="EMBL" id="AB001488">
    <property type="protein sequence ID" value="BAA19295.1"/>
    <property type="status" value="ALT_INIT"/>
    <property type="molecule type" value="Genomic_DNA"/>
</dbReference>
<dbReference type="EMBL" id="AL009126">
    <property type="protein sequence ID" value="CAB12265.2"/>
    <property type="molecule type" value="Genomic_DNA"/>
</dbReference>
<dbReference type="PIR" id="D69772">
    <property type="entry name" value="D69772"/>
</dbReference>
<dbReference type="RefSeq" id="NP_388339.2">
    <property type="nucleotide sequence ID" value="NC_000964.3"/>
</dbReference>
<dbReference type="RefSeq" id="WP_003246685.1">
    <property type="nucleotide sequence ID" value="NZ_OZ025638.1"/>
</dbReference>
<dbReference type="SMR" id="P96614"/>
<dbReference type="FunCoup" id="P96614">
    <property type="interactions" value="505"/>
</dbReference>
<dbReference type="IntAct" id="P96614">
    <property type="interactions" value="3"/>
</dbReference>
<dbReference type="MINT" id="P96614"/>
<dbReference type="STRING" id="224308.BSU04580"/>
<dbReference type="jPOST" id="P96614"/>
<dbReference type="PaxDb" id="224308-BSU04580"/>
<dbReference type="DNASU" id="938170"/>
<dbReference type="EnsemblBacteria" id="CAB12265">
    <property type="protein sequence ID" value="CAB12265"/>
    <property type="gene ID" value="BSU_04580"/>
</dbReference>
<dbReference type="GeneID" id="938170"/>
<dbReference type="KEGG" id="bsu:BSU04580"/>
<dbReference type="PATRIC" id="fig|224308.179.peg.486"/>
<dbReference type="eggNOG" id="COG0513">
    <property type="taxonomic scope" value="Bacteria"/>
</dbReference>
<dbReference type="InParanoid" id="P96614"/>
<dbReference type="OrthoDB" id="9805696at2"/>
<dbReference type="BioCyc" id="BSUB:BSU04580-MONOMER"/>
<dbReference type="Proteomes" id="UP000001570">
    <property type="component" value="Chromosome"/>
</dbReference>
<dbReference type="GO" id="GO:0043590">
    <property type="term" value="C:bacterial nucleoid"/>
    <property type="evidence" value="ECO:0000314"/>
    <property type="project" value="UniProtKB"/>
</dbReference>
<dbReference type="GO" id="GO:0005829">
    <property type="term" value="C:cytosol"/>
    <property type="evidence" value="ECO:0000318"/>
    <property type="project" value="GO_Central"/>
</dbReference>
<dbReference type="GO" id="GO:0005886">
    <property type="term" value="C:plasma membrane"/>
    <property type="evidence" value="ECO:0007669"/>
    <property type="project" value="UniProtKB-SubCell"/>
</dbReference>
<dbReference type="GO" id="GO:0005524">
    <property type="term" value="F:ATP binding"/>
    <property type="evidence" value="ECO:0000314"/>
    <property type="project" value="UniProtKB"/>
</dbReference>
<dbReference type="GO" id="GO:0016887">
    <property type="term" value="F:ATP hydrolysis activity"/>
    <property type="evidence" value="ECO:0007669"/>
    <property type="project" value="RHEA"/>
</dbReference>
<dbReference type="GO" id="GO:0003723">
    <property type="term" value="F:RNA binding"/>
    <property type="evidence" value="ECO:0000314"/>
    <property type="project" value="UniProtKB"/>
</dbReference>
<dbReference type="GO" id="GO:0003724">
    <property type="term" value="F:RNA helicase activity"/>
    <property type="evidence" value="ECO:0000314"/>
    <property type="project" value="UniProtKB"/>
</dbReference>
<dbReference type="GO" id="GO:0033592">
    <property type="term" value="F:RNA strand annealing activity"/>
    <property type="evidence" value="ECO:0000318"/>
    <property type="project" value="GO_Central"/>
</dbReference>
<dbReference type="GO" id="GO:0009409">
    <property type="term" value="P:response to cold"/>
    <property type="evidence" value="ECO:0000316"/>
    <property type="project" value="UniProtKB"/>
</dbReference>
<dbReference type="GO" id="GO:0042254">
    <property type="term" value="P:ribosome biogenesis"/>
    <property type="evidence" value="ECO:0007669"/>
    <property type="project" value="UniProtKB-KW"/>
</dbReference>
<dbReference type="GO" id="GO:0006401">
    <property type="term" value="P:RNA catabolic process"/>
    <property type="evidence" value="ECO:0007669"/>
    <property type="project" value="UniProtKB-UniRule"/>
</dbReference>
<dbReference type="CDD" id="cd00268">
    <property type="entry name" value="DEADc"/>
    <property type="match status" value="1"/>
</dbReference>
<dbReference type="CDD" id="cd18787">
    <property type="entry name" value="SF2_C_DEAD"/>
    <property type="match status" value="1"/>
</dbReference>
<dbReference type="FunFam" id="3.40.50.300:FF:000108">
    <property type="entry name" value="ATP-dependent RNA helicase RhlE"/>
    <property type="match status" value="1"/>
</dbReference>
<dbReference type="FunFam" id="3.40.50.300:FF:000783">
    <property type="entry name" value="DEAD-box ATP-dependent RNA helicase CshA"/>
    <property type="match status" value="1"/>
</dbReference>
<dbReference type="Gene3D" id="3.40.50.300">
    <property type="entry name" value="P-loop containing nucleotide triphosphate hydrolases"/>
    <property type="match status" value="2"/>
</dbReference>
<dbReference type="HAMAP" id="MF_01493">
    <property type="entry name" value="DEAD_helicase_CshA"/>
    <property type="match status" value="1"/>
</dbReference>
<dbReference type="InterPro" id="IPR011545">
    <property type="entry name" value="DEAD/DEAH_box_helicase_dom"/>
</dbReference>
<dbReference type="InterPro" id="IPR050547">
    <property type="entry name" value="DEAD_box_RNA_helicases"/>
</dbReference>
<dbReference type="InterPro" id="IPR030880">
    <property type="entry name" value="DEAD_helicase_CshA"/>
</dbReference>
<dbReference type="InterPro" id="IPR014001">
    <property type="entry name" value="Helicase_ATP-bd"/>
</dbReference>
<dbReference type="InterPro" id="IPR001650">
    <property type="entry name" value="Helicase_C-like"/>
</dbReference>
<dbReference type="InterPro" id="IPR027417">
    <property type="entry name" value="P-loop_NTPase"/>
</dbReference>
<dbReference type="InterPro" id="IPR000629">
    <property type="entry name" value="RNA-helicase_DEAD-box_CS"/>
</dbReference>
<dbReference type="InterPro" id="IPR014014">
    <property type="entry name" value="RNA_helicase_DEAD_Q_motif"/>
</dbReference>
<dbReference type="PANTHER" id="PTHR47963">
    <property type="entry name" value="DEAD-BOX ATP-DEPENDENT RNA HELICASE 47, MITOCHONDRIAL"/>
    <property type="match status" value="1"/>
</dbReference>
<dbReference type="PANTHER" id="PTHR47963:SF5">
    <property type="entry name" value="DEAD-BOX ATP-DEPENDENT RNA HELICASE CSHA"/>
    <property type="match status" value="1"/>
</dbReference>
<dbReference type="Pfam" id="PF00270">
    <property type="entry name" value="DEAD"/>
    <property type="match status" value="1"/>
</dbReference>
<dbReference type="Pfam" id="PF00271">
    <property type="entry name" value="Helicase_C"/>
    <property type="match status" value="1"/>
</dbReference>
<dbReference type="SMART" id="SM00487">
    <property type="entry name" value="DEXDc"/>
    <property type="match status" value="1"/>
</dbReference>
<dbReference type="SMART" id="SM00490">
    <property type="entry name" value="HELICc"/>
    <property type="match status" value="1"/>
</dbReference>
<dbReference type="SUPFAM" id="SSF52540">
    <property type="entry name" value="P-loop containing nucleoside triphosphate hydrolases"/>
    <property type="match status" value="1"/>
</dbReference>
<dbReference type="PROSITE" id="PS00039">
    <property type="entry name" value="DEAD_ATP_HELICASE"/>
    <property type="match status" value="1"/>
</dbReference>
<dbReference type="PROSITE" id="PS51192">
    <property type="entry name" value="HELICASE_ATP_BIND_1"/>
    <property type="match status" value="1"/>
</dbReference>
<dbReference type="PROSITE" id="PS51194">
    <property type="entry name" value="HELICASE_CTER"/>
    <property type="match status" value="1"/>
</dbReference>
<dbReference type="PROSITE" id="PS51195">
    <property type="entry name" value="Q_MOTIF"/>
    <property type="match status" value="1"/>
</dbReference>
<organism>
    <name type="scientific">Bacillus subtilis (strain 168)</name>
    <dbReference type="NCBI Taxonomy" id="224308"/>
    <lineage>
        <taxon>Bacteria</taxon>
        <taxon>Bacillati</taxon>
        <taxon>Bacillota</taxon>
        <taxon>Bacilli</taxon>
        <taxon>Bacillales</taxon>
        <taxon>Bacillaceae</taxon>
        <taxon>Bacillus</taxon>
    </lineage>
</organism>
<evidence type="ECO:0000255" key="1">
    <source>
        <dbReference type="HAMAP-Rule" id="MF_01493"/>
    </source>
</evidence>
<evidence type="ECO:0000256" key="2">
    <source>
        <dbReference type="SAM" id="MobiDB-lite"/>
    </source>
</evidence>
<evidence type="ECO:0000269" key="3">
    <source>
    </source>
</evidence>
<evidence type="ECO:0000269" key="4">
    <source>
    </source>
</evidence>
<evidence type="ECO:0000269" key="5">
    <source>
    </source>
</evidence>
<evidence type="ECO:0000269" key="6">
    <source>
    </source>
</evidence>
<evidence type="ECO:0000269" key="7">
    <source>
    </source>
</evidence>
<evidence type="ECO:0000269" key="8">
    <source>
    </source>
</evidence>
<evidence type="ECO:0000269" key="9">
    <source>
    </source>
</evidence>
<evidence type="ECO:0000269" key="10">
    <source>
    </source>
</evidence>
<evidence type="ECO:0000269" key="11">
    <source>
    </source>
</evidence>
<evidence type="ECO:0000305" key="12"/>
<evidence type="ECO:0000305" key="13">
    <source>
    </source>
</evidence>
<name>CSHA_BACSU</name>
<comment type="function">
    <text evidence="4 5 10">The most abundant DEAD-box RNA helicase. An ATP-dependent RNA helicase with RNA-dependent ATPase activity. May work in conjunction with the cold shock proteins to ensure proper initiation of transcription at low and optimal temperatures. In vitro, unwinds dsRNA in both 5'- and 3'- directions. Plays a role in ribosomal 50S subunit assembly. Its deletion leads to changes in mRNA levels for over 200 transcripts.</text>
</comment>
<comment type="catalytic activity">
    <reaction evidence="1">
        <text>ATP + H2O = ADP + phosphate + H(+)</text>
        <dbReference type="Rhea" id="RHEA:13065"/>
        <dbReference type="ChEBI" id="CHEBI:15377"/>
        <dbReference type="ChEBI" id="CHEBI:15378"/>
        <dbReference type="ChEBI" id="CHEBI:30616"/>
        <dbReference type="ChEBI" id="CHEBI:43474"/>
        <dbReference type="ChEBI" id="CHEBI:456216"/>
        <dbReference type="EC" id="3.6.4.13"/>
    </reaction>
</comment>
<comment type="cofactor">
    <cofactor evidence="13">
        <name>Mg(2+)</name>
        <dbReference type="ChEBI" id="CHEBI:18420"/>
    </cofactor>
</comment>
<comment type="activity regulation">
    <text evidence="5">RNA helicase activity is inhibited by EDTA.</text>
</comment>
<comment type="subunit">
    <text evidence="6 7 8 9 10">Homodimer or oligomer. May interact with RNA helicases CshB and DbpA (DeaD). Probably a component of the RNA degradosome complex composed of rny, rnjA, rnjB, pnp, pfkA and eno, and possibly also rnpA (although rnjA and rnjB's presence is unclear). Interacts with ribosomal proteins L1 and L3 (rplA and rplC) and the protein component of RNase RnpA. Interacts with the RNA polymerase core (PubMed:21710567).</text>
</comment>
<comment type="interaction">
    <interactant intactId="EBI-6415210">
        <id>P96614</id>
    </interactant>
    <interactant intactId="EBI-6415578">
        <id>O31774</id>
        <label>rny</label>
    </interactant>
    <organismsDiffer>false</organismsDiffer>
    <experiments>2</experiments>
</comment>
<comment type="subcellular location">
    <subcellularLocation>
        <location>Cytoplasm</location>
        <location>Nucleoid</location>
    </subcellularLocation>
    <subcellularLocation>
        <location>Cell membrane</location>
    </subcellularLocation>
    <text evidence="4 5 6">Shows transcription-dependent localization at subcellular sites surrounding the nucleoid (PubMed:16352840). Associated with free 50S ribosomal subunit, 70S ribosome and polysomes (PubMed:16861794). Cell membrane association shown in (PubMed:20572937).</text>
</comment>
<comment type="induction">
    <text evidence="3 4 6 10">Induced by cold shock (PubMed:12399512). Constitutively expressed at 37 and 16 degrees Celsius in rich and minimal medium and in exponential, transition and stationary phase (at protein level) (PubMed:20572937, PubMed:23175651). Protein level not increased at 16 degrees Celsius (at protein level) (PubMed:20572937).</text>
</comment>
<comment type="domain">
    <text evidence="6">The C-terminal half of the protein (residues 225-494) is required for interaction with most RNA degradosome partners, whereas dimerization or oligomerization only requires the extreme C-terminus (residues 413-494). Addition of the latter domain to CshB confers on it the ability to interact with Rny.</text>
</comment>
<comment type="disruption phenotype">
    <text evidence="4 5 10 11">Slow vegetative growth at 37 degrees Celsius (PubMed:36053906), impaired growth at 22 degrees Celsius (PubMed:16861794) and 16 degrees Celsius (PubMed:23175651). Another report shows no growth difference at 15 degrees Celsius (PubMed:16352840). The presence of CshA or CshB is essential for viability; in a cshA disruption mutant further depletion of cshB stops growth after 1 cell duplication (PubMed:16352840). Others show a quadruple disruption of all RNA helicases (cshA, cshB, deaD, yfmL) was not lethal at 37 degrees Celsius, although both 50S and 70S ribosomes are decreased, growth stops at 16 degrees (PubMed:23175651). At 20 degrees Celsius cells are elongated and wrinkled, with smaller cell diameter and thickened walls, and decreased amounts of 70S and 50S ribosomes; levels of over 200 transcripts are altered (PubMed:23175651). Suppresses the synthetic lethality of a dnaA1-yabA deletion for growth on rich medium, in part due to a decrease in DNA replication initiation (PubMed:36053906).</text>
</comment>
<comment type="similarity">
    <text evidence="1">Belongs to the DEAD box helicase family. CshA subfamily.</text>
</comment>
<comment type="sequence caution" evidence="12">
    <conflict type="erroneous initiation">
        <sequence resource="EMBL-CDS" id="BAA19295"/>
    </conflict>
    <text>Extended N-terminus.</text>
</comment>
<protein>
    <recommendedName>
        <fullName evidence="1">DEAD-box ATP-dependent RNA helicase CshA</fullName>
        <ecNumber evidence="1">3.6.4.13</ecNumber>
    </recommendedName>
</protein>
<keyword id="KW-0067">ATP-binding</keyword>
<keyword id="KW-1003">Cell membrane</keyword>
<keyword id="KW-0963">Cytoplasm</keyword>
<keyword id="KW-0347">Helicase</keyword>
<keyword id="KW-0378">Hydrolase</keyword>
<keyword id="KW-0472">Membrane</keyword>
<keyword id="KW-0547">Nucleotide-binding</keyword>
<keyword id="KW-1185">Reference proteome</keyword>
<keyword id="KW-0690">Ribosome biogenesis</keyword>
<keyword id="KW-0694">RNA-binding</keyword>
<keyword id="KW-0346">Stress response</keyword>
<accession>P96614</accession>
<accession>Q797L0</accession>
<feature type="chain" id="PRO_0000280054" description="DEAD-box ATP-dependent RNA helicase CshA">
    <location>
        <begin position="1"/>
        <end position="494"/>
    </location>
</feature>
<feature type="domain" description="Helicase ATP-binding" evidence="1">
    <location>
        <begin position="34"/>
        <end position="204"/>
    </location>
</feature>
<feature type="domain" description="Helicase C-terminal" evidence="1">
    <location>
        <begin position="215"/>
        <end position="375"/>
    </location>
</feature>
<feature type="region of interest" description="Required for dimerization or oligomerization">
    <location>
        <begin position="413"/>
        <end position="494"/>
    </location>
</feature>
<feature type="region of interest" description="Disordered" evidence="2">
    <location>
        <begin position="429"/>
        <end position="494"/>
    </location>
</feature>
<feature type="short sequence motif" description="Q motif">
    <location>
        <begin position="3"/>
        <end position="31"/>
    </location>
</feature>
<feature type="short sequence motif" description="DEAD box">
    <location>
        <begin position="152"/>
        <end position="155"/>
    </location>
</feature>
<feature type="compositionally biased region" description="Basic residues" evidence="2">
    <location>
        <begin position="443"/>
        <end position="452"/>
    </location>
</feature>
<feature type="compositionally biased region" description="Basic and acidic residues" evidence="2">
    <location>
        <begin position="473"/>
        <end position="488"/>
    </location>
</feature>
<feature type="binding site" evidence="1">
    <location>
        <begin position="47"/>
        <end position="54"/>
    </location>
    <ligand>
        <name>ATP</name>
        <dbReference type="ChEBI" id="CHEBI:30616"/>
    </ligand>
</feature>